<sequence>MIKQALISVSDKTGIVDFAKSLSDLGVKLLSTGGTAKLLADAGLPVTEVADYTGFPEMLDGRVKTLHPKVHGGILARRDLPEHMQALEQHGIPTIDLLVVNLYPFVATIAKDDCTLADAIENIDIGGPTMLRSAAKNHRDVTVVVDPADYAVVLDEMKANGNTVGHPTNFRLATKVFAHTAQYDGAITNYLTSLTDELKHASRSTYPATLNLAFDKVQDLRYGENPHQSAAFYRDLATPAGALANYRQLQGKELSYNNIADSDAAWECVKTFDAPACVIIKHANPCGVAVGNDSADAYAKAFQTDPTSAFGGIIAFNREVDEAAAQAVAKQFVEVLIAPSFSDAAKQVFAAKQNVRLLEIALGDGHNAFDLKRVGGGLLVQSLDSRNVQPSELRVVTKRQPTAKEMDDLLFAWRVAKYVKSNAIVFCGNGMTLGVGAGQMSRVDSARIASIKAQNAGLTLAGSAVASDAFFPFRDGLDVVVAAGATCVIQPGGSMRDDEVIAAADEHGIAMVLTGVRHFRH</sequence>
<accession>Q1BZ33</accession>
<evidence type="ECO:0000255" key="1">
    <source>
        <dbReference type="HAMAP-Rule" id="MF_00139"/>
    </source>
</evidence>
<evidence type="ECO:0000255" key="2">
    <source>
        <dbReference type="PROSITE-ProRule" id="PRU01202"/>
    </source>
</evidence>
<protein>
    <recommendedName>
        <fullName evidence="1">Bifunctional purine biosynthesis protein PurH</fullName>
    </recommendedName>
    <domain>
        <recommendedName>
            <fullName evidence="1">Phosphoribosylaminoimidazolecarboxamide formyltransferase</fullName>
            <ecNumber evidence="1">2.1.2.3</ecNumber>
        </recommendedName>
        <alternativeName>
            <fullName evidence="1">AICAR transformylase</fullName>
        </alternativeName>
    </domain>
    <domain>
        <recommendedName>
            <fullName evidence="1">IMP cyclohydrolase</fullName>
            <ecNumber evidence="1">3.5.4.10</ecNumber>
        </recommendedName>
        <alternativeName>
            <fullName evidence="1">ATIC</fullName>
        </alternativeName>
        <alternativeName>
            <fullName evidence="1">IMP synthase</fullName>
        </alternativeName>
        <alternativeName>
            <fullName evidence="1">Inosinicase</fullName>
        </alternativeName>
    </domain>
</protein>
<dbReference type="EC" id="2.1.2.3" evidence="1"/>
<dbReference type="EC" id="3.5.4.10" evidence="1"/>
<dbReference type="EMBL" id="CP000378">
    <property type="protein sequence ID" value="ABF75122.1"/>
    <property type="molecule type" value="Genomic_DNA"/>
</dbReference>
<dbReference type="SMR" id="Q1BZ33"/>
<dbReference type="HOGENOM" id="CLU_016316_5_2_4"/>
<dbReference type="UniPathway" id="UPA00074">
    <property type="reaction ID" value="UER00133"/>
</dbReference>
<dbReference type="UniPathway" id="UPA00074">
    <property type="reaction ID" value="UER00135"/>
</dbReference>
<dbReference type="GO" id="GO:0005829">
    <property type="term" value="C:cytosol"/>
    <property type="evidence" value="ECO:0007669"/>
    <property type="project" value="TreeGrafter"/>
</dbReference>
<dbReference type="GO" id="GO:0003937">
    <property type="term" value="F:IMP cyclohydrolase activity"/>
    <property type="evidence" value="ECO:0007669"/>
    <property type="project" value="UniProtKB-UniRule"/>
</dbReference>
<dbReference type="GO" id="GO:0004643">
    <property type="term" value="F:phosphoribosylaminoimidazolecarboxamide formyltransferase activity"/>
    <property type="evidence" value="ECO:0007669"/>
    <property type="project" value="UniProtKB-UniRule"/>
</dbReference>
<dbReference type="GO" id="GO:0006189">
    <property type="term" value="P:'de novo' IMP biosynthetic process"/>
    <property type="evidence" value="ECO:0007669"/>
    <property type="project" value="UniProtKB-UniRule"/>
</dbReference>
<dbReference type="CDD" id="cd01421">
    <property type="entry name" value="IMPCH"/>
    <property type="match status" value="1"/>
</dbReference>
<dbReference type="FunFam" id="3.40.140.20:FF:000001">
    <property type="entry name" value="Bifunctional purine biosynthesis protein PurH"/>
    <property type="match status" value="1"/>
</dbReference>
<dbReference type="FunFam" id="3.40.140.20:FF:000002">
    <property type="entry name" value="Bifunctional purine biosynthesis protein PurH"/>
    <property type="match status" value="1"/>
</dbReference>
<dbReference type="FunFam" id="3.40.50.1380:FF:000001">
    <property type="entry name" value="Bifunctional purine biosynthesis protein PurH"/>
    <property type="match status" value="1"/>
</dbReference>
<dbReference type="Gene3D" id="3.40.140.20">
    <property type="match status" value="2"/>
</dbReference>
<dbReference type="Gene3D" id="3.40.50.1380">
    <property type="entry name" value="Methylglyoxal synthase-like domain"/>
    <property type="match status" value="1"/>
</dbReference>
<dbReference type="HAMAP" id="MF_00139">
    <property type="entry name" value="PurH"/>
    <property type="match status" value="1"/>
</dbReference>
<dbReference type="InterPro" id="IPR024051">
    <property type="entry name" value="AICAR_Tfase_dup_dom_sf"/>
</dbReference>
<dbReference type="InterPro" id="IPR016193">
    <property type="entry name" value="Cytidine_deaminase-like"/>
</dbReference>
<dbReference type="InterPro" id="IPR011607">
    <property type="entry name" value="MGS-like_dom"/>
</dbReference>
<dbReference type="InterPro" id="IPR036914">
    <property type="entry name" value="MGS-like_dom_sf"/>
</dbReference>
<dbReference type="InterPro" id="IPR002695">
    <property type="entry name" value="PurH-like"/>
</dbReference>
<dbReference type="NCBIfam" id="NF002049">
    <property type="entry name" value="PRK00881.1"/>
    <property type="match status" value="1"/>
</dbReference>
<dbReference type="NCBIfam" id="TIGR00355">
    <property type="entry name" value="purH"/>
    <property type="match status" value="1"/>
</dbReference>
<dbReference type="PANTHER" id="PTHR11692:SF0">
    <property type="entry name" value="BIFUNCTIONAL PURINE BIOSYNTHESIS PROTEIN ATIC"/>
    <property type="match status" value="1"/>
</dbReference>
<dbReference type="PANTHER" id="PTHR11692">
    <property type="entry name" value="BIFUNCTIONAL PURINE BIOSYNTHESIS PROTEIN PURH"/>
    <property type="match status" value="1"/>
</dbReference>
<dbReference type="Pfam" id="PF01808">
    <property type="entry name" value="AICARFT_IMPCHas"/>
    <property type="match status" value="1"/>
</dbReference>
<dbReference type="Pfam" id="PF02142">
    <property type="entry name" value="MGS"/>
    <property type="match status" value="1"/>
</dbReference>
<dbReference type="PIRSF" id="PIRSF000414">
    <property type="entry name" value="AICARFT_IMPCHas"/>
    <property type="match status" value="1"/>
</dbReference>
<dbReference type="SMART" id="SM00798">
    <property type="entry name" value="AICARFT_IMPCHas"/>
    <property type="match status" value="1"/>
</dbReference>
<dbReference type="SMART" id="SM00851">
    <property type="entry name" value="MGS"/>
    <property type="match status" value="1"/>
</dbReference>
<dbReference type="SUPFAM" id="SSF53927">
    <property type="entry name" value="Cytidine deaminase-like"/>
    <property type="match status" value="1"/>
</dbReference>
<dbReference type="SUPFAM" id="SSF52335">
    <property type="entry name" value="Methylglyoxal synthase-like"/>
    <property type="match status" value="1"/>
</dbReference>
<dbReference type="PROSITE" id="PS51855">
    <property type="entry name" value="MGS"/>
    <property type="match status" value="1"/>
</dbReference>
<organism>
    <name type="scientific">Burkholderia orbicola (strain AU 1054)</name>
    <dbReference type="NCBI Taxonomy" id="331271"/>
    <lineage>
        <taxon>Bacteria</taxon>
        <taxon>Pseudomonadati</taxon>
        <taxon>Pseudomonadota</taxon>
        <taxon>Betaproteobacteria</taxon>
        <taxon>Burkholderiales</taxon>
        <taxon>Burkholderiaceae</taxon>
        <taxon>Burkholderia</taxon>
        <taxon>Burkholderia cepacia complex</taxon>
        <taxon>Burkholderia orbicola</taxon>
    </lineage>
</organism>
<comment type="catalytic activity">
    <reaction evidence="1">
        <text>(6R)-10-formyltetrahydrofolate + 5-amino-1-(5-phospho-beta-D-ribosyl)imidazole-4-carboxamide = 5-formamido-1-(5-phospho-D-ribosyl)imidazole-4-carboxamide + (6S)-5,6,7,8-tetrahydrofolate</text>
        <dbReference type="Rhea" id="RHEA:22192"/>
        <dbReference type="ChEBI" id="CHEBI:57453"/>
        <dbReference type="ChEBI" id="CHEBI:58467"/>
        <dbReference type="ChEBI" id="CHEBI:58475"/>
        <dbReference type="ChEBI" id="CHEBI:195366"/>
        <dbReference type="EC" id="2.1.2.3"/>
    </reaction>
</comment>
<comment type="catalytic activity">
    <reaction evidence="1">
        <text>IMP + H2O = 5-formamido-1-(5-phospho-D-ribosyl)imidazole-4-carboxamide</text>
        <dbReference type="Rhea" id="RHEA:18445"/>
        <dbReference type="ChEBI" id="CHEBI:15377"/>
        <dbReference type="ChEBI" id="CHEBI:58053"/>
        <dbReference type="ChEBI" id="CHEBI:58467"/>
        <dbReference type="EC" id="3.5.4.10"/>
    </reaction>
</comment>
<comment type="pathway">
    <text evidence="1">Purine metabolism; IMP biosynthesis via de novo pathway; 5-formamido-1-(5-phospho-D-ribosyl)imidazole-4-carboxamide from 5-amino-1-(5-phospho-D-ribosyl)imidazole-4-carboxamide (10-formyl THF route): step 1/1.</text>
</comment>
<comment type="pathway">
    <text evidence="1">Purine metabolism; IMP biosynthesis via de novo pathway; IMP from 5-formamido-1-(5-phospho-D-ribosyl)imidazole-4-carboxamide: step 1/1.</text>
</comment>
<comment type="domain">
    <text evidence="1">The IMP cyclohydrolase activity resides in the N-terminal region.</text>
</comment>
<comment type="similarity">
    <text evidence="1">Belongs to the PurH family.</text>
</comment>
<proteinExistence type="inferred from homology"/>
<name>PUR9_BURO1</name>
<reference key="1">
    <citation type="submission" date="2006-05" db="EMBL/GenBank/DDBJ databases">
        <title>Complete sequence of chromosome 1 of Burkholderia cenocepacia AU 1054.</title>
        <authorList>
            <consortium name="US DOE Joint Genome Institute"/>
            <person name="Copeland A."/>
            <person name="Lucas S."/>
            <person name="Lapidus A."/>
            <person name="Barry K."/>
            <person name="Detter J.C."/>
            <person name="Glavina del Rio T."/>
            <person name="Hammon N."/>
            <person name="Israni S."/>
            <person name="Dalin E."/>
            <person name="Tice H."/>
            <person name="Pitluck S."/>
            <person name="Chain P."/>
            <person name="Malfatti S."/>
            <person name="Shin M."/>
            <person name="Vergez L."/>
            <person name="Schmutz J."/>
            <person name="Larimer F."/>
            <person name="Land M."/>
            <person name="Hauser L."/>
            <person name="Kyrpides N."/>
            <person name="Lykidis A."/>
            <person name="LiPuma J.J."/>
            <person name="Konstantinidis K."/>
            <person name="Tiedje J.M."/>
            <person name="Richardson P."/>
        </authorList>
    </citation>
    <scope>NUCLEOTIDE SEQUENCE [LARGE SCALE GENOMIC DNA]</scope>
    <source>
        <strain>AU 1054</strain>
    </source>
</reference>
<gene>
    <name evidence="1" type="primary">purH</name>
    <name type="ordered locus">Bcen_0208</name>
</gene>
<keyword id="KW-0378">Hydrolase</keyword>
<keyword id="KW-0511">Multifunctional enzyme</keyword>
<keyword id="KW-0658">Purine biosynthesis</keyword>
<keyword id="KW-0808">Transferase</keyword>
<feature type="chain" id="PRO_1000018851" description="Bifunctional purine biosynthesis protein PurH">
    <location>
        <begin position="1"/>
        <end position="521"/>
    </location>
</feature>
<feature type="domain" description="MGS-like" evidence="2">
    <location>
        <begin position="1"/>
        <end position="145"/>
    </location>
</feature>